<feature type="chain" id="PRO_0000335758" description="4-diphosphocytidyl-2-C-methyl-D-erythritol kinase">
    <location>
        <begin position="1"/>
        <end position="316"/>
    </location>
</feature>
<feature type="active site" evidence="1">
    <location>
        <position position="14"/>
    </location>
</feature>
<feature type="active site" evidence="1">
    <location>
        <position position="138"/>
    </location>
</feature>
<feature type="binding site" evidence="1">
    <location>
        <begin position="96"/>
        <end position="106"/>
    </location>
    <ligand>
        <name>ATP</name>
        <dbReference type="ChEBI" id="CHEBI:30616"/>
    </ligand>
</feature>
<proteinExistence type="inferred from homology"/>
<evidence type="ECO:0000255" key="1">
    <source>
        <dbReference type="HAMAP-Rule" id="MF_00061"/>
    </source>
</evidence>
<name>ISPE_SOLUE</name>
<keyword id="KW-0067">ATP-binding</keyword>
<keyword id="KW-0414">Isoprene biosynthesis</keyword>
<keyword id="KW-0418">Kinase</keyword>
<keyword id="KW-0547">Nucleotide-binding</keyword>
<keyword id="KW-0808">Transferase</keyword>
<dbReference type="EC" id="2.7.1.148" evidence="1"/>
<dbReference type="EMBL" id="CP000473">
    <property type="protein sequence ID" value="ABJ88010.1"/>
    <property type="molecule type" value="Genomic_DNA"/>
</dbReference>
<dbReference type="SMR" id="Q01QR0"/>
<dbReference type="FunCoup" id="Q01QR0">
    <property type="interactions" value="324"/>
</dbReference>
<dbReference type="STRING" id="234267.Acid_7097"/>
<dbReference type="KEGG" id="sus:Acid_7097"/>
<dbReference type="eggNOG" id="COG1947">
    <property type="taxonomic scope" value="Bacteria"/>
</dbReference>
<dbReference type="HOGENOM" id="CLU_053057_1_1_0"/>
<dbReference type="InParanoid" id="Q01QR0"/>
<dbReference type="OrthoDB" id="9809438at2"/>
<dbReference type="UniPathway" id="UPA00056">
    <property type="reaction ID" value="UER00094"/>
</dbReference>
<dbReference type="GO" id="GO:0050515">
    <property type="term" value="F:4-(cytidine 5'-diphospho)-2-C-methyl-D-erythritol kinase activity"/>
    <property type="evidence" value="ECO:0007669"/>
    <property type="project" value="UniProtKB-UniRule"/>
</dbReference>
<dbReference type="GO" id="GO:0005524">
    <property type="term" value="F:ATP binding"/>
    <property type="evidence" value="ECO:0007669"/>
    <property type="project" value="UniProtKB-UniRule"/>
</dbReference>
<dbReference type="GO" id="GO:0019288">
    <property type="term" value="P:isopentenyl diphosphate biosynthetic process, methylerythritol 4-phosphate pathway"/>
    <property type="evidence" value="ECO:0007669"/>
    <property type="project" value="UniProtKB-UniRule"/>
</dbReference>
<dbReference type="GO" id="GO:0016114">
    <property type="term" value="P:terpenoid biosynthetic process"/>
    <property type="evidence" value="ECO:0007669"/>
    <property type="project" value="InterPro"/>
</dbReference>
<dbReference type="Gene3D" id="3.30.230.10">
    <property type="match status" value="1"/>
</dbReference>
<dbReference type="Gene3D" id="3.30.70.890">
    <property type="entry name" value="GHMP kinase, C-terminal domain"/>
    <property type="match status" value="1"/>
</dbReference>
<dbReference type="HAMAP" id="MF_00061">
    <property type="entry name" value="IspE"/>
    <property type="match status" value="1"/>
</dbReference>
<dbReference type="InterPro" id="IPR013750">
    <property type="entry name" value="GHMP_kinase_C_dom"/>
</dbReference>
<dbReference type="InterPro" id="IPR036554">
    <property type="entry name" value="GHMP_kinase_C_sf"/>
</dbReference>
<dbReference type="InterPro" id="IPR006204">
    <property type="entry name" value="GHMP_kinase_N_dom"/>
</dbReference>
<dbReference type="InterPro" id="IPR004424">
    <property type="entry name" value="IspE"/>
</dbReference>
<dbReference type="InterPro" id="IPR020568">
    <property type="entry name" value="Ribosomal_Su5_D2-typ_SF"/>
</dbReference>
<dbReference type="InterPro" id="IPR014721">
    <property type="entry name" value="Ribsml_uS5_D2-typ_fold_subgr"/>
</dbReference>
<dbReference type="NCBIfam" id="TIGR00154">
    <property type="entry name" value="ispE"/>
    <property type="match status" value="1"/>
</dbReference>
<dbReference type="PANTHER" id="PTHR43527">
    <property type="entry name" value="4-DIPHOSPHOCYTIDYL-2-C-METHYL-D-ERYTHRITOL KINASE, CHLOROPLASTIC"/>
    <property type="match status" value="1"/>
</dbReference>
<dbReference type="PANTHER" id="PTHR43527:SF2">
    <property type="entry name" value="4-DIPHOSPHOCYTIDYL-2-C-METHYL-D-ERYTHRITOL KINASE, CHLOROPLASTIC"/>
    <property type="match status" value="1"/>
</dbReference>
<dbReference type="Pfam" id="PF08544">
    <property type="entry name" value="GHMP_kinases_C"/>
    <property type="match status" value="1"/>
</dbReference>
<dbReference type="Pfam" id="PF00288">
    <property type="entry name" value="GHMP_kinases_N"/>
    <property type="match status" value="1"/>
</dbReference>
<dbReference type="PIRSF" id="PIRSF010376">
    <property type="entry name" value="IspE"/>
    <property type="match status" value="1"/>
</dbReference>
<dbReference type="SUPFAM" id="SSF55060">
    <property type="entry name" value="GHMP Kinase, C-terminal domain"/>
    <property type="match status" value="1"/>
</dbReference>
<dbReference type="SUPFAM" id="SSF54211">
    <property type="entry name" value="Ribosomal protein S5 domain 2-like"/>
    <property type="match status" value="1"/>
</dbReference>
<gene>
    <name evidence="1" type="primary">ispE</name>
    <name type="ordered locus">Acid_7097</name>
</gene>
<comment type="function">
    <text evidence="1">Catalyzes the phosphorylation of the position 2 hydroxy group of 4-diphosphocytidyl-2C-methyl-D-erythritol.</text>
</comment>
<comment type="catalytic activity">
    <reaction evidence="1">
        <text>4-CDP-2-C-methyl-D-erythritol + ATP = 4-CDP-2-C-methyl-D-erythritol 2-phosphate + ADP + H(+)</text>
        <dbReference type="Rhea" id="RHEA:18437"/>
        <dbReference type="ChEBI" id="CHEBI:15378"/>
        <dbReference type="ChEBI" id="CHEBI:30616"/>
        <dbReference type="ChEBI" id="CHEBI:57823"/>
        <dbReference type="ChEBI" id="CHEBI:57919"/>
        <dbReference type="ChEBI" id="CHEBI:456216"/>
        <dbReference type="EC" id="2.7.1.148"/>
    </reaction>
</comment>
<comment type="pathway">
    <text evidence="1">Isoprenoid biosynthesis; isopentenyl diphosphate biosynthesis via DXP pathway; isopentenyl diphosphate from 1-deoxy-D-xylulose 5-phosphate: step 3/6.</text>
</comment>
<comment type="similarity">
    <text evidence="1">Belongs to the GHMP kinase family. IspE subfamily.</text>
</comment>
<reference key="1">
    <citation type="journal article" date="2009" name="Appl. Environ. Microbiol.">
        <title>Three genomes from the phylum Acidobacteria provide insight into the lifestyles of these microorganisms in soils.</title>
        <authorList>
            <person name="Ward N.L."/>
            <person name="Challacombe J.F."/>
            <person name="Janssen P.H."/>
            <person name="Henrissat B."/>
            <person name="Coutinho P.M."/>
            <person name="Wu M."/>
            <person name="Xie G."/>
            <person name="Haft D.H."/>
            <person name="Sait M."/>
            <person name="Badger J."/>
            <person name="Barabote R.D."/>
            <person name="Bradley B."/>
            <person name="Brettin T.S."/>
            <person name="Brinkac L.M."/>
            <person name="Bruce D."/>
            <person name="Creasy T."/>
            <person name="Daugherty S.C."/>
            <person name="Davidsen T.M."/>
            <person name="DeBoy R.T."/>
            <person name="Detter J.C."/>
            <person name="Dodson R.J."/>
            <person name="Durkin A.S."/>
            <person name="Ganapathy A."/>
            <person name="Gwinn-Giglio M."/>
            <person name="Han C.S."/>
            <person name="Khouri H."/>
            <person name="Kiss H."/>
            <person name="Kothari S.P."/>
            <person name="Madupu R."/>
            <person name="Nelson K.E."/>
            <person name="Nelson W.C."/>
            <person name="Paulsen I."/>
            <person name="Penn K."/>
            <person name="Ren Q."/>
            <person name="Rosovitz M.J."/>
            <person name="Selengut J.D."/>
            <person name="Shrivastava S."/>
            <person name="Sullivan S.A."/>
            <person name="Tapia R."/>
            <person name="Thompson L.S."/>
            <person name="Watkins K.L."/>
            <person name="Yang Q."/>
            <person name="Yu C."/>
            <person name="Zafar N."/>
            <person name="Zhou L."/>
            <person name="Kuske C.R."/>
        </authorList>
    </citation>
    <scope>NUCLEOTIDE SEQUENCE [LARGE SCALE GENOMIC DNA]</scope>
    <source>
        <strain>Ellin6076</strain>
    </source>
</reference>
<sequence length="316" mass="34667">MSTTRHAHLRALAKINLDLRVLGKRPDGFHELRTIFQTISLADTLEISFTPARKTTIELTDVLNIADNLVVRAARMVMDAMRATGRIEMRLTKRIPMGAGLGGGSSDAAAVLLALPVLAGRVLPLPKLSHIGEQLGSDVPFFLLGGAATGIGRGSELFPLPDVPAQSGVVVAPGIHVNTAQAYRDLSRRLSGSLTTELQQNKIFSFQSLTWDTGRLAEARNDFEAVVFEQHPKLAAIKRRLVRAGASAAMMSGSGSALYGLFRDRNAIFRAIELLGEDTTYRISLVSRKRYRALWRRAMSEHTRSNVWPLQSRYNP</sequence>
<organism>
    <name type="scientific">Solibacter usitatus (strain Ellin6076)</name>
    <dbReference type="NCBI Taxonomy" id="234267"/>
    <lineage>
        <taxon>Bacteria</taxon>
        <taxon>Pseudomonadati</taxon>
        <taxon>Acidobacteriota</taxon>
        <taxon>Terriglobia</taxon>
        <taxon>Bryobacterales</taxon>
        <taxon>Solibacteraceae</taxon>
        <taxon>Candidatus Solibacter</taxon>
    </lineage>
</organism>
<protein>
    <recommendedName>
        <fullName evidence="1">4-diphosphocytidyl-2-C-methyl-D-erythritol kinase</fullName>
        <shortName evidence="1">CMK</shortName>
        <ecNumber evidence="1">2.7.1.148</ecNumber>
    </recommendedName>
    <alternativeName>
        <fullName evidence="1">4-(cytidine-5'-diphospho)-2-C-methyl-D-erythritol kinase</fullName>
    </alternativeName>
</protein>
<accession>Q01QR0</accession>